<comment type="function">
    <text evidence="1">Together with the chaperonin GroEL, plays an essential role in assisting protein folding. The GroEL-GroES system forms a nano-cage that allows encapsulation of the non-native substrate proteins and provides a physical environment optimized to promote and accelerate protein folding. GroES binds to the apical surface of the GroEL ring, thereby capping the opening of the GroEL channel.</text>
</comment>
<comment type="subunit">
    <text evidence="1">Heptamer of 7 subunits arranged in a ring. Interacts with the chaperonin GroEL.</text>
</comment>
<comment type="subcellular location">
    <subcellularLocation>
        <location evidence="1">Cytoplasm</location>
    </subcellularLocation>
</comment>
<comment type="similarity">
    <text evidence="1">Belongs to the GroES chaperonin family.</text>
</comment>
<keyword id="KW-0143">Chaperone</keyword>
<keyword id="KW-0963">Cytoplasm</keyword>
<keyword id="KW-1185">Reference proteome</keyword>
<evidence type="ECO:0000255" key="1">
    <source>
        <dbReference type="HAMAP-Rule" id="MF_00580"/>
    </source>
</evidence>
<dbReference type="EMBL" id="AE009951">
    <property type="protein sequence ID" value="AAL94872.1"/>
    <property type="molecule type" value="Genomic_DNA"/>
</dbReference>
<dbReference type="RefSeq" id="NP_603573.1">
    <property type="nucleotide sequence ID" value="NC_003454.1"/>
</dbReference>
<dbReference type="RefSeq" id="WP_005902067.1">
    <property type="nucleotide sequence ID" value="NZ_OZ209243.1"/>
</dbReference>
<dbReference type="SMR" id="Q8R5X6"/>
<dbReference type="FunCoup" id="Q8R5X6">
    <property type="interactions" value="312"/>
</dbReference>
<dbReference type="STRING" id="190304.FN0676"/>
<dbReference type="PaxDb" id="190304-FN0676"/>
<dbReference type="EnsemblBacteria" id="AAL94872">
    <property type="protein sequence ID" value="AAL94872"/>
    <property type="gene ID" value="FN0676"/>
</dbReference>
<dbReference type="KEGG" id="fnu:FN0676"/>
<dbReference type="PATRIC" id="fig|190304.8.peg.1241"/>
<dbReference type="eggNOG" id="COG0234">
    <property type="taxonomic scope" value="Bacteria"/>
</dbReference>
<dbReference type="HOGENOM" id="CLU_132825_2_3_0"/>
<dbReference type="InParanoid" id="Q8R5X6"/>
<dbReference type="BioCyc" id="FNUC190304:G1FZS-1262-MONOMER"/>
<dbReference type="Proteomes" id="UP000002521">
    <property type="component" value="Chromosome"/>
</dbReference>
<dbReference type="GO" id="GO:0005737">
    <property type="term" value="C:cytoplasm"/>
    <property type="evidence" value="ECO:0007669"/>
    <property type="project" value="UniProtKB-SubCell"/>
</dbReference>
<dbReference type="GO" id="GO:0005524">
    <property type="term" value="F:ATP binding"/>
    <property type="evidence" value="ECO:0007669"/>
    <property type="project" value="InterPro"/>
</dbReference>
<dbReference type="GO" id="GO:0046872">
    <property type="term" value="F:metal ion binding"/>
    <property type="evidence" value="ECO:0000318"/>
    <property type="project" value="GO_Central"/>
</dbReference>
<dbReference type="GO" id="GO:0044183">
    <property type="term" value="F:protein folding chaperone"/>
    <property type="evidence" value="ECO:0007669"/>
    <property type="project" value="InterPro"/>
</dbReference>
<dbReference type="GO" id="GO:0051087">
    <property type="term" value="F:protein-folding chaperone binding"/>
    <property type="evidence" value="ECO:0000318"/>
    <property type="project" value="GO_Central"/>
</dbReference>
<dbReference type="GO" id="GO:0051082">
    <property type="term" value="F:unfolded protein binding"/>
    <property type="evidence" value="ECO:0000318"/>
    <property type="project" value="GO_Central"/>
</dbReference>
<dbReference type="GO" id="GO:0051085">
    <property type="term" value="P:chaperone cofactor-dependent protein refolding"/>
    <property type="evidence" value="ECO:0000318"/>
    <property type="project" value="GO_Central"/>
</dbReference>
<dbReference type="CDD" id="cd00320">
    <property type="entry name" value="cpn10"/>
    <property type="match status" value="1"/>
</dbReference>
<dbReference type="FunFam" id="2.30.33.40:FF:000010">
    <property type="entry name" value="10 kDa chaperonin"/>
    <property type="match status" value="1"/>
</dbReference>
<dbReference type="Gene3D" id="2.30.33.40">
    <property type="entry name" value="GroES chaperonin"/>
    <property type="match status" value="1"/>
</dbReference>
<dbReference type="HAMAP" id="MF_00580">
    <property type="entry name" value="CH10"/>
    <property type="match status" value="1"/>
</dbReference>
<dbReference type="InterPro" id="IPR020818">
    <property type="entry name" value="Chaperonin_GroES"/>
</dbReference>
<dbReference type="InterPro" id="IPR037124">
    <property type="entry name" value="Chaperonin_GroES_sf"/>
</dbReference>
<dbReference type="InterPro" id="IPR018369">
    <property type="entry name" value="Chaprnonin_Cpn10_CS"/>
</dbReference>
<dbReference type="InterPro" id="IPR011032">
    <property type="entry name" value="GroES-like_sf"/>
</dbReference>
<dbReference type="PANTHER" id="PTHR10772">
    <property type="entry name" value="10 KDA HEAT SHOCK PROTEIN"/>
    <property type="match status" value="1"/>
</dbReference>
<dbReference type="PANTHER" id="PTHR10772:SF63">
    <property type="entry name" value="20 KDA CHAPERONIN, CHLOROPLASTIC"/>
    <property type="match status" value="1"/>
</dbReference>
<dbReference type="Pfam" id="PF00166">
    <property type="entry name" value="Cpn10"/>
    <property type="match status" value="1"/>
</dbReference>
<dbReference type="PRINTS" id="PR00297">
    <property type="entry name" value="CHAPERONIN10"/>
</dbReference>
<dbReference type="SMART" id="SM00883">
    <property type="entry name" value="Cpn10"/>
    <property type="match status" value="1"/>
</dbReference>
<dbReference type="SUPFAM" id="SSF50129">
    <property type="entry name" value="GroES-like"/>
    <property type="match status" value="1"/>
</dbReference>
<dbReference type="PROSITE" id="PS00681">
    <property type="entry name" value="CHAPERONINS_CPN10"/>
    <property type="match status" value="1"/>
</dbReference>
<feature type="chain" id="PRO_0000174756" description="Co-chaperonin GroES">
    <location>
        <begin position="1"/>
        <end position="90"/>
    </location>
</feature>
<gene>
    <name evidence="1" type="primary">groES</name>
    <name evidence="1" type="synonym">groS</name>
    <name type="ordered locus">FN0676</name>
</gene>
<accession>Q8R5X6</accession>
<sequence>MNIKPIGERVLLKPIKKEEKTKSGILLSSKSSNTDTQNQAEVIALGKGEKLEGIKVGDKVIFNKFSGNEIEDGDVKYLIVNAEDILAIIG</sequence>
<proteinExistence type="inferred from homology"/>
<reference key="1">
    <citation type="journal article" date="2002" name="J. Bacteriol.">
        <title>Genome sequence and analysis of the oral bacterium Fusobacterium nucleatum strain ATCC 25586.</title>
        <authorList>
            <person name="Kapatral V."/>
            <person name="Anderson I."/>
            <person name="Ivanova N."/>
            <person name="Reznik G."/>
            <person name="Los T."/>
            <person name="Lykidis A."/>
            <person name="Bhattacharyya A."/>
            <person name="Bartman A."/>
            <person name="Gardner W."/>
            <person name="Grechkin G."/>
            <person name="Zhu L."/>
            <person name="Vasieva O."/>
            <person name="Chu L."/>
            <person name="Kogan Y."/>
            <person name="Chaga O."/>
            <person name="Goltsman E."/>
            <person name="Bernal A."/>
            <person name="Larsen N."/>
            <person name="D'Souza M."/>
            <person name="Walunas T."/>
            <person name="Pusch G."/>
            <person name="Haselkorn R."/>
            <person name="Fonstein M."/>
            <person name="Kyrpides N.C."/>
            <person name="Overbeek R."/>
        </authorList>
    </citation>
    <scope>NUCLEOTIDE SEQUENCE [LARGE SCALE GENOMIC DNA]</scope>
    <source>
        <strain>ATCC 25586 / DSM 15643 / BCRC 10681 / CIP 101130 / JCM 8532 / KCTC 2640 / LMG 13131 / VPI 4355</strain>
    </source>
</reference>
<name>CH10_FUSNN</name>
<protein>
    <recommendedName>
        <fullName evidence="1">Co-chaperonin GroES</fullName>
    </recommendedName>
    <alternativeName>
        <fullName evidence="1">10 kDa chaperonin</fullName>
    </alternativeName>
    <alternativeName>
        <fullName evidence="1">Chaperonin-10</fullName>
        <shortName evidence="1">Cpn10</shortName>
    </alternativeName>
</protein>
<organism>
    <name type="scientific">Fusobacterium nucleatum subsp. nucleatum (strain ATCC 25586 / DSM 15643 / BCRC 10681 / CIP 101130 / JCM 8532 / KCTC 2640 / LMG 13131 / VPI 4355)</name>
    <dbReference type="NCBI Taxonomy" id="190304"/>
    <lineage>
        <taxon>Bacteria</taxon>
        <taxon>Fusobacteriati</taxon>
        <taxon>Fusobacteriota</taxon>
        <taxon>Fusobacteriia</taxon>
        <taxon>Fusobacteriales</taxon>
        <taxon>Fusobacteriaceae</taxon>
        <taxon>Fusobacterium</taxon>
    </lineage>
</organism>